<keyword id="KW-1185">Reference proteome</keyword>
<keyword id="KW-0677">Repeat</keyword>
<keyword id="KW-0708">Seed storage protein</keyword>
<keyword id="KW-0732">Signal</keyword>
<keyword id="KW-0758">Storage protein</keyword>
<feature type="signal peptide">
    <location>
        <begin position="1"/>
        <end position="21"/>
    </location>
</feature>
<feature type="chain" id="PRO_0000041612" description="Zein-alpha ZG99">
    <location>
        <begin position="22"/>
        <end position="235"/>
    </location>
</feature>
<comment type="function">
    <text>Zeins are major seed storage proteins.</text>
</comment>
<comment type="miscellaneous">
    <text>The alpha zeins of 19 kDa and 22 kDa account for 70% of the total zein fraction. They are encoded by a large multigene family.</text>
</comment>
<comment type="miscellaneous">
    <text evidence="1">Structurally, 22K and 19K zeins are composed of nine adjacent, topologically antiparallel helices clustered within a distorted cylinder.</text>
</comment>
<comment type="similarity">
    <text evidence="2">Belongs to the zein family.</text>
</comment>
<accession>P04704</accession>
<reference key="1">
    <citation type="journal article" date="1982" name="J. Biol. Chem.">
        <title>Analysis of sequence microheterogeneity among zein messenger RNAs.</title>
        <authorList>
            <person name="Marks M.D."/>
            <person name="Larkins B.A."/>
        </authorList>
    </citation>
    <scope>NUCLEOTIDE SEQUENCE</scope>
</reference>
<reference key="2">
    <citation type="journal article" date="1982" name="Cell">
        <title>Cloning and sequence analysis reveal structural variation among related zein genes in maize.</title>
        <authorList>
            <person name="Pedersen K."/>
            <person name="Devereux J."/>
            <person name="Wilson D.R."/>
            <person name="Sheldon E."/>
            <person name="Larkins B.A."/>
        </authorList>
    </citation>
    <scope>NUCLEOTIDE SEQUENCE</scope>
</reference>
<name>ZEA2_MAIZE</name>
<organism>
    <name type="scientific">Zea mays</name>
    <name type="common">Maize</name>
    <dbReference type="NCBI Taxonomy" id="4577"/>
    <lineage>
        <taxon>Eukaryota</taxon>
        <taxon>Viridiplantae</taxon>
        <taxon>Streptophyta</taxon>
        <taxon>Embryophyta</taxon>
        <taxon>Tracheophyta</taxon>
        <taxon>Spermatophyta</taxon>
        <taxon>Magnoliopsida</taxon>
        <taxon>Liliopsida</taxon>
        <taxon>Poales</taxon>
        <taxon>Poaceae</taxon>
        <taxon>PACMAD clade</taxon>
        <taxon>Panicoideae</taxon>
        <taxon>Andropogonodae</taxon>
        <taxon>Andropogoneae</taxon>
        <taxon>Tripsacinae</taxon>
        <taxon>Zea</taxon>
    </lineage>
</organism>
<proteinExistence type="evidence at transcript level"/>
<protein>
    <recommendedName>
        <fullName>Zein-alpha ZG99</fullName>
    </recommendedName>
    <alternativeName>
        <fullName>19 kDa zein ZG99</fullName>
    </alternativeName>
</protein>
<evidence type="ECO:0000250" key="1">
    <source>
        <dbReference type="UniProtKB" id="P04698"/>
    </source>
</evidence>
<evidence type="ECO:0000305" key="2"/>
<sequence length="235" mass="25575">MAAKIFCLIMLLGLSASAATASIFPQCSQAPIASLLPPYLSPAMSSVCENPILLPYRIQQAIAAGILPLSPLFLQQSSALLQQLPLVHLLAQNIRAQQLQQLVLANLAAYSQQQQFLPFNQLAALNSAAYLQQQQLLPFSQLAAAYPRQFLPFNQLAALNSHAYVQQQQLLPFSQLAAVSPAAFLTQQQLLPFYLHTAPNVGTLLQLQQLLPFDQLALTNPAAFYQQPIIGGALF</sequence>
<dbReference type="EMBL" id="V01470">
    <property type="protein sequence ID" value="CAA24717.1"/>
    <property type="molecule type" value="Genomic_DNA"/>
</dbReference>
<dbReference type="EMBL" id="V01479">
    <property type="protein sequence ID" value="CAA24726.1"/>
    <property type="molecule type" value="mRNA"/>
</dbReference>
<dbReference type="PIR" id="A29288">
    <property type="entry name" value="ZIZM99"/>
</dbReference>
<dbReference type="RefSeq" id="NP_001106038.1">
    <property type="nucleotide sequence ID" value="NM_001112568.1"/>
</dbReference>
<dbReference type="STRING" id="4577.P04704"/>
<dbReference type="MaizeGDB" id="58096"/>
<dbReference type="InParanoid" id="P04704"/>
<dbReference type="Proteomes" id="UP000007305">
    <property type="component" value="Unplaced"/>
</dbReference>
<dbReference type="ExpressionAtlas" id="P04704">
    <property type="expression patterns" value="baseline and differential"/>
</dbReference>
<dbReference type="GO" id="GO:0045735">
    <property type="term" value="F:nutrient reservoir activity"/>
    <property type="evidence" value="ECO:0007669"/>
    <property type="project" value="UniProtKB-KW"/>
</dbReference>
<dbReference type="InterPro" id="IPR002530">
    <property type="entry name" value="Zein"/>
</dbReference>
<dbReference type="InterPro" id="IPR051903">
    <property type="entry name" value="Zein-alpha"/>
</dbReference>
<dbReference type="PANTHER" id="PTHR48214">
    <property type="entry name" value="ZEIN-ALPHA PMS2"/>
    <property type="match status" value="1"/>
</dbReference>
<dbReference type="PANTHER" id="PTHR48214:SF1">
    <property type="entry name" value="ZEIN-ALPHA PMS2"/>
    <property type="match status" value="1"/>
</dbReference>
<dbReference type="Pfam" id="PF01559">
    <property type="entry name" value="Zein"/>
    <property type="match status" value="2"/>
</dbReference>